<feature type="chain" id="PRO_0000102560" description="Endoribonuclease YbeY">
    <location>
        <begin position="1"/>
        <end position="171"/>
    </location>
</feature>
<feature type="binding site" evidence="1">
    <location>
        <position position="115"/>
    </location>
    <ligand>
        <name>Zn(2+)</name>
        <dbReference type="ChEBI" id="CHEBI:29105"/>
        <note>catalytic</note>
    </ligand>
</feature>
<feature type="binding site" evidence="1">
    <location>
        <position position="119"/>
    </location>
    <ligand>
        <name>Zn(2+)</name>
        <dbReference type="ChEBI" id="CHEBI:29105"/>
        <note>catalytic</note>
    </ligand>
</feature>
<feature type="binding site" evidence="1">
    <location>
        <position position="125"/>
    </location>
    <ligand>
        <name>Zn(2+)</name>
        <dbReference type="ChEBI" id="CHEBI:29105"/>
        <note>catalytic</note>
    </ligand>
</feature>
<organism>
    <name type="scientific">Tropheryma whipplei (strain Twist)</name>
    <name type="common">Whipple's bacillus</name>
    <dbReference type="NCBI Taxonomy" id="203267"/>
    <lineage>
        <taxon>Bacteria</taxon>
        <taxon>Bacillati</taxon>
        <taxon>Actinomycetota</taxon>
        <taxon>Actinomycetes</taxon>
        <taxon>Micrococcales</taxon>
        <taxon>Tropherymataceae</taxon>
        <taxon>Tropheryma</taxon>
    </lineage>
</organism>
<reference key="1">
    <citation type="journal article" date="2003" name="Genome Res.">
        <title>Tropheryma whipplei twist: a human pathogenic Actinobacteria with a reduced genome.</title>
        <authorList>
            <person name="Raoult D."/>
            <person name="Ogata H."/>
            <person name="Audic S."/>
            <person name="Robert C."/>
            <person name="Suhre K."/>
            <person name="Drancourt M."/>
            <person name="Claverie J.-M."/>
        </authorList>
    </citation>
    <scope>NUCLEOTIDE SEQUENCE [LARGE SCALE GENOMIC DNA]</scope>
    <source>
        <strain>Twist</strain>
    </source>
</reference>
<gene>
    <name evidence="1" type="primary">ybeY</name>
    <name type="ordered locus">TWT_283</name>
</gene>
<comment type="function">
    <text evidence="1">Single strand-specific metallo-endoribonuclease involved in late-stage 70S ribosome quality control and in maturation of the 3' terminus of the 16S rRNA.</text>
</comment>
<comment type="cofactor">
    <cofactor evidence="1">
        <name>Zn(2+)</name>
        <dbReference type="ChEBI" id="CHEBI:29105"/>
    </cofactor>
    <text evidence="1">Binds 1 zinc ion.</text>
</comment>
<comment type="subcellular location">
    <subcellularLocation>
        <location evidence="1">Cytoplasm</location>
    </subcellularLocation>
</comment>
<comment type="similarity">
    <text evidence="1">Belongs to the endoribonuclease YbeY family.</text>
</comment>
<keyword id="KW-0963">Cytoplasm</keyword>
<keyword id="KW-0255">Endonuclease</keyword>
<keyword id="KW-0378">Hydrolase</keyword>
<keyword id="KW-0479">Metal-binding</keyword>
<keyword id="KW-0540">Nuclease</keyword>
<keyword id="KW-1185">Reference proteome</keyword>
<keyword id="KW-0690">Ribosome biogenesis</keyword>
<keyword id="KW-0698">rRNA processing</keyword>
<keyword id="KW-0862">Zinc</keyword>
<dbReference type="EC" id="3.1.-.-" evidence="1"/>
<dbReference type="EMBL" id="AE014184">
    <property type="protein sequence ID" value="AAO44380.1"/>
    <property type="molecule type" value="Genomic_DNA"/>
</dbReference>
<dbReference type="RefSeq" id="WP_011096436.1">
    <property type="nucleotide sequence ID" value="NC_004572.3"/>
</dbReference>
<dbReference type="SMR" id="Q83GJ1"/>
<dbReference type="STRING" id="203267.TWT_283"/>
<dbReference type="GeneID" id="67388268"/>
<dbReference type="KEGG" id="twh:TWT_283"/>
<dbReference type="eggNOG" id="COG0319">
    <property type="taxonomic scope" value="Bacteria"/>
</dbReference>
<dbReference type="HOGENOM" id="CLU_1562201_0_0_11"/>
<dbReference type="OrthoDB" id="9807740at2"/>
<dbReference type="Proteomes" id="UP000002200">
    <property type="component" value="Chromosome"/>
</dbReference>
<dbReference type="GO" id="GO:0005737">
    <property type="term" value="C:cytoplasm"/>
    <property type="evidence" value="ECO:0007669"/>
    <property type="project" value="UniProtKB-SubCell"/>
</dbReference>
<dbReference type="GO" id="GO:0004222">
    <property type="term" value="F:metalloendopeptidase activity"/>
    <property type="evidence" value="ECO:0007669"/>
    <property type="project" value="InterPro"/>
</dbReference>
<dbReference type="GO" id="GO:0004521">
    <property type="term" value="F:RNA endonuclease activity"/>
    <property type="evidence" value="ECO:0007669"/>
    <property type="project" value="UniProtKB-UniRule"/>
</dbReference>
<dbReference type="GO" id="GO:0008270">
    <property type="term" value="F:zinc ion binding"/>
    <property type="evidence" value="ECO:0007669"/>
    <property type="project" value="UniProtKB-UniRule"/>
</dbReference>
<dbReference type="GO" id="GO:0006364">
    <property type="term" value="P:rRNA processing"/>
    <property type="evidence" value="ECO:0007669"/>
    <property type="project" value="UniProtKB-UniRule"/>
</dbReference>
<dbReference type="Gene3D" id="3.40.390.30">
    <property type="entry name" value="Metalloproteases ('zincins'), catalytic domain"/>
    <property type="match status" value="1"/>
</dbReference>
<dbReference type="HAMAP" id="MF_00009">
    <property type="entry name" value="Endoribonucl_YbeY"/>
    <property type="match status" value="1"/>
</dbReference>
<dbReference type="InterPro" id="IPR023091">
    <property type="entry name" value="MetalPrtase_cat_dom_sf_prd"/>
</dbReference>
<dbReference type="InterPro" id="IPR002036">
    <property type="entry name" value="YbeY"/>
</dbReference>
<dbReference type="InterPro" id="IPR020549">
    <property type="entry name" value="YbeY_CS"/>
</dbReference>
<dbReference type="NCBIfam" id="TIGR00043">
    <property type="entry name" value="rRNA maturation RNase YbeY"/>
    <property type="match status" value="1"/>
</dbReference>
<dbReference type="PANTHER" id="PTHR46986">
    <property type="entry name" value="ENDORIBONUCLEASE YBEY, CHLOROPLASTIC"/>
    <property type="match status" value="1"/>
</dbReference>
<dbReference type="PANTHER" id="PTHR46986:SF1">
    <property type="entry name" value="ENDORIBONUCLEASE YBEY, CHLOROPLASTIC"/>
    <property type="match status" value="1"/>
</dbReference>
<dbReference type="Pfam" id="PF02130">
    <property type="entry name" value="YbeY"/>
    <property type="match status" value="1"/>
</dbReference>
<dbReference type="SUPFAM" id="SSF55486">
    <property type="entry name" value="Metalloproteases ('zincins'), catalytic domain"/>
    <property type="match status" value="1"/>
</dbReference>
<dbReference type="PROSITE" id="PS01306">
    <property type="entry name" value="UPF0054"/>
    <property type="match status" value="1"/>
</dbReference>
<accession>Q83GJ1</accession>
<proteinExistence type="inferred from homology"/>
<sequence length="171" mass="19240">MTGLLYLQNSSGYNDCYFKTESLVDFLYRTLFIDKGSYLGVSFITAAEMRDLKIKHFGVNEDSDVLSFPIDEIAPGSENSLVYGVLGDIVVCPETVMRQAVRHPFEHEIYLLVVHGFLHLLGFDHSDAPSKKEMFSLQAKLIEDFFALENLGTPSEEITITPDLRPSLGRI</sequence>
<protein>
    <recommendedName>
        <fullName evidence="1">Endoribonuclease YbeY</fullName>
        <ecNumber evidence="1">3.1.-.-</ecNumber>
    </recommendedName>
</protein>
<name>YBEY_TROWT</name>
<evidence type="ECO:0000255" key="1">
    <source>
        <dbReference type="HAMAP-Rule" id="MF_00009"/>
    </source>
</evidence>